<organism>
    <name type="scientific">Staphylococcus aureus (strain Mu50 / ATCC 700699)</name>
    <dbReference type="NCBI Taxonomy" id="158878"/>
    <lineage>
        <taxon>Bacteria</taxon>
        <taxon>Bacillati</taxon>
        <taxon>Bacillota</taxon>
        <taxon>Bacilli</taxon>
        <taxon>Bacillales</taxon>
        <taxon>Staphylococcaceae</taxon>
        <taxon>Staphylococcus</taxon>
    </lineage>
</organism>
<gene>
    <name evidence="1" type="primary">rpoY</name>
    <name type="ordered locus">SAV1090</name>
</gene>
<feature type="chain" id="PRO_0000163136" description="DNA-directed RNA polymerase subunit epsilon">
    <location>
        <begin position="1"/>
        <end position="72"/>
    </location>
</feature>
<comment type="function">
    <text evidence="1">A non-essential component of RNA polymerase (RNAP).</text>
</comment>
<comment type="catalytic activity">
    <reaction evidence="1">
        <text>RNA(n) + a ribonucleoside 5'-triphosphate = RNA(n+1) + diphosphate</text>
        <dbReference type="Rhea" id="RHEA:21248"/>
        <dbReference type="Rhea" id="RHEA-COMP:14527"/>
        <dbReference type="Rhea" id="RHEA-COMP:17342"/>
        <dbReference type="ChEBI" id="CHEBI:33019"/>
        <dbReference type="ChEBI" id="CHEBI:61557"/>
        <dbReference type="ChEBI" id="CHEBI:140395"/>
        <dbReference type="EC" id="2.7.7.6"/>
    </reaction>
</comment>
<comment type="subunit">
    <text evidence="1">RNAP is composed of a core of 2 alpha, a beta and a beta' subunit. The core is associated with a delta subunit, and at least one of epsilon or omega. When a sigma factor is associated with the core the holoenzyme is formed, which can initiate transcription.</text>
</comment>
<comment type="similarity">
    <text evidence="1">Belongs to the RNA polymerase subunit epsilon family.</text>
</comment>
<comment type="sequence caution" evidence="2">
    <conflict type="erroneous initiation">
        <sequence resource="EMBL-CDS" id="BAB57252"/>
    </conflict>
    <text>Truncated N-terminus.</text>
</comment>
<evidence type="ECO:0000255" key="1">
    <source>
        <dbReference type="HAMAP-Rule" id="MF_01553"/>
    </source>
</evidence>
<evidence type="ECO:0000305" key="2"/>
<accession>Q931U1</accession>
<reference key="1">
    <citation type="journal article" date="2001" name="Lancet">
        <title>Whole genome sequencing of meticillin-resistant Staphylococcus aureus.</title>
        <authorList>
            <person name="Kuroda M."/>
            <person name="Ohta T."/>
            <person name="Uchiyama I."/>
            <person name="Baba T."/>
            <person name="Yuzawa H."/>
            <person name="Kobayashi I."/>
            <person name="Cui L."/>
            <person name="Oguchi A."/>
            <person name="Aoki K."/>
            <person name="Nagai Y."/>
            <person name="Lian J.-Q."/>
            <person name="Ito T."/>
            <person name="Kanamori M."/>
            <person name="Matsumaru H."/>
            <person name="Maruyama A."/>
            <person name="Murakami H."/>
            <person name="Hosoyama A."/>
            <person name="Mizutani-Ui Y."/>
            <person name="Takahashi N.K."/>
            <person name="Sawano T."/>
            <person name="Inoue R."/>
            <person name="Kaito C."/>
            <person name="Sekimizu K."/>
            <person name="Hirakawa H."/>
            <person name="Kuhara S."/>
            <person name="Goto S."/>
            <person name="Yabuzaki J."/>
            <person name="Kanehisa M."/>
            <person name="Yamashita A."/>
            <person name="Oshima K."/>
            <person name="Furuya K."/>
            <person name="Yoshino C."/>
            <person name="Shiba T."/>
            <person name="Hattori M."/>
            <person name="Ogasawara N."/>
            <person name="Hayashi H."/>
            <person name="Hiramatsu K."/>
        </authorList>
    </citation>
    <scope>NUCLEOTIDE SEQUENCE [LARGE SCALE GENOMIC DNA]</scope>
    <source>
        <strain>Mu50 / ATCC 700699</strain>
    </source>
</reference>
<proteinExistence type="inferred from homology"/>
<dbReference type="EC" id="2.7.7.6" evidence="1"/>
<dbReference type="EMBL" id="BA000017">
    <property type="protein sequence ID" value="BAB57252.2"/>
    <property type="status" value="ALT_INIT"/>
    <property type="molecule type" value="Genomic_DNA"/>
</dbReference>
<dbReference type="RefSeq" id="WP_000257888.1">
    <property type="nucleotide sequence ID" value="NC_002758.2"/>
</dbReference>
<dbReference type="SMR" id="Q931U1"/>
<dbReference type="KEGG" id="sav:SAV1090"/>
<dbReference type="HOGENOM" id="CLU_187518_1_0_9"/>
<dbReference type="PhylomeDB" id="Q931U1"/>
<dbReference type="Proteomes" id="UP000002481">
    <property type="component" value="Chromosome"/>
</dbReference>
<dbReference type="GO" id="GO:0000428">
    <property type="term" value="C:DNA-directed RNA polymerase complex"/>
    <property type="evidence" value="ECO:0007669"/>
    <property type="project" value="UniProtKB-KW"/>
</dbReference>
<dbReference type="GO" id="GO:0003677">
    <property type="term" value="F:DNA binding"/>
    <property type="evidence" value="ECO:0007669"/>
    <property type="project" value="UniProtKB-UniRule"/>
</dbReference>
<dbReference type="GO" id="GO:0003899">
    <property type="term" value="F:DNA-directed RNA polymerase activity"/>
    <property type="evidence" value="ECO:0007669"/>
    <property type="project" value="UniProtKB-UniRule"/>
</dbReference>
<dbReference type="GO" id="GO:0006351">
    <property type="term" value="P:DNA-templated transcription"/>
    <property type="evidence" value="ECO:0007669"/>
    <property type="project" value="UniProtKB-UniRule"/>
</dbReference>
<dbReference type="Gene3D" id="3.10.20.730">
    <property type="entry name" value="RNAP, epsilon subunit-like"/>
    <property type="match status" value="1"/>
</dbReference>
<dbReference type="HAMAP" id="MF_01553">
    <property type="entry name" value="RNApol_bact_RpoY"/>
    <property type="match status" value="1"/>
</dbReference>
<dbReference type="InterPro" id="IPR009907">
    <property type="entry name" value="RpoY"/>
</dbReference>
<dbReference type="NCBIfam" id="NF010188">
    <property type="entry name" value="PRK13667.1"/>
    <property type="match status" value="1"/>
</dbReference>
<dbReference type="Pfam" id="PF07288">
    <property type="entry name" value="RpoY"/>
    <property type="match status" value="1"/>
</dbReference>
<keyword id="KW-0240">DNA-directed RNA polymerase</keyword>
<keyword id="KW-0548">Nucleotidyltransferase</keyword>
<keyword id="KW-0804">Transcription</keyword>
<keyword id="KW-0808">Transferase</keyword>
<name>RPOY_STAAM</name>
<protein>
    <recommendedName>
        <fullName evidence="1">DNA-directed RNA polymerase subunit epsilon</fullName>
        <shortName evidence="1">RNAP epsilon subunit</shortName>
        <ecNumber evidence="1">2.7.7.6</ecNumber>
    </recommendedName>
    <alternativeName>
        <fullName evidence="1">RNA polymerase epsilon subunit</fullName>
    </alternativeName>
    <alternativeName>
        <fullName evidence="1">Transcriptase subunit epsilon</fullName>
    </alternativeName>
</protein>
<sequence>MAVFKVFYQHNRDEVIVRENTQSLYVEAQTEEQVRRYLKDRNFNIEFITKLEGAHLDYEKENSEHFNVEIAK</sequence>